<comment type="subcellular location">
    <subcellularLocation>
        <location evidence="2">Membrane</location>
        <topology evidence="2">Single-pass membrane protein</topology>
    </subcellularLocation>
</comment>
<feature type="chain" id="PRO_0000107253" description="Uncharacterized protein MJ1285">
    <location>
        <begin position="1"/>
        <end position="184"/>
    </location>
</feature>
<feature type="transmembrane region" description="Helical" evidence="1">
    <location>
        <begin position="5"/>
        <end position="27"/>
    </location>
</feature>
<accession>Q58681</accession>
<protein>
    <recommendedName>
        <fullName>Uncharacterized protein MJ1285</fullName>
    </recommendedName>
</protein>
<evidence type="ECO:0000255" key="1"/>
<evidence type="ECO:0000305" key="2"/>
<reference key="1">
    <citation type="journal article" date="1996" name="Science">
        <title>Complete genome sequence of the methanogenic archaeon, Methanococcus jannaschii.</title>
        <authorList>
            <person name="Bult C.J."/>
            <person name="White O."/>
            <person name="Olsen G.J."/>
            <person name="Zhou L."/>
            <person name="Fleischmann R.D."/>
            <person name="Sutton G.G."/>
            <person name="Blake J.A."/>
            <person name="FitzGerald L.M."/>
            <person name="Clayton R.A."/>
            <person name="Gocayne J.D."/>
            <person name="Kerlavage A.R."/>
            <person name="Dougherty B.A."/>
            <person name="Tomb J.-F."/>
            <person name="Adams M.D."/>
            <person name="Reich C.I."/>
            <person name="Overbeek R."/>
            <person name="Kirkness E.F."/>
            <person name="Weinstock K.G."/>
            <person name="Merrick J.M."/>
            <person name="Glodek A."/>
            <person name="Scott J.L."/>
            <person name="Geoghagen N.S.M."/>
            <person name="Weidman J.F."/>
            <person name="Fuhrmann J.L."/>
            <person name="Nguyen D."/>
            <person name="Utterback T.R."/>
            <person name="Kelley J.M."/>
            <person name="Peterson J.D."/>
            <person name="Sadow P.W."/>
            <person name="Hanna M.C."/>
            <person name="Cotton M.D."/>
            <person name="Roberts K.M."/>
            <person name="Hurst M.A."/>
            <person name="Kaine B.P."/>
            <person name="Borodovsky M."/>
            <person name="Klenk H.-P."/>
            <person name="Fraser C.M."/>
            <person name="Smith H.O."/>
            <person name="Woese C.R."/>
            <person name="Venter J.C."/>
        </authorList>
    </citation>
    <scope>NUCLEOTIDE SEQUENCE [LARGE SCALE GENOMIC DNA]</scope>
    <source>
        <strain>ATCC 43067 / DSM 2661 / JAL-1 / JCM 10045 / NBRC 100440</strain>
    </source>
</reference>
<keyword id="KW-0472">Membrane</keyword>
<keyword id="KW-1185">Reference proteome</keyword>
<keyword id="KW-0812">Transmembrane</keyword>
<keyword id="KW-1133">Transmembrane helix</keyword>
<proteinExistence type="predicted"/>
<gene>
    <name type="ordered locus">MJ1285</name>
</gene>
<name>Y1285_METJA</name>
<sequence>MELDYLLATAMFLIVCVYVISETVNLHSVYDIEEAKKEFLMYYNDLKYNYSISKGDLIFNFKVNKIGYVIEGFVFKDTSESRELIKYLENLNGSYIIAYSPSKDEFIITKNHEFLRIIGHYNISAKYKKGEYGDIEIIYPKNYSINYREFQGISCNKLFEVPFYIVDKNENITLKYYGILEVGR</sequence>
<organism>
    <name type="scientific">Methanocaldococcus jannaschii (strain ATCC 43067 / DSM 2661 / JAL-1 / JCM 10045 / NBRC 100440)</name>
    <name type="common">Methanococcus jannaschii</name>
    <dbReference type="NCBI Taxonomy" id="243232"/>
    <lineage>
        <taxon>Archaea</taxon>
        <taxon>Methanobacteriati</taxon>
        <taxon>Methanobacteriota</taxon>
        <taxon>Methanomada group</taxon>
        <taxon>Methanococci</taxon>
        <taxon>Methanococcales</taxon>
        <taxon>Methanocaldococcaceae</taxon>
        <taxon>Methanocaldococcus</taxon>
    </lineage>
</organism>
<dbReference type="EMBL" id="L77117">
    <property type="protein sequence ID" value="AAB99294.1"/>
    <property type="molecule type" value="Genomic_DNA"/>
</dbReference>
<dbReference type="PIR" id="D64460">
    <property type="entry name" value="D64460"/>
</dbReference>
<dbReference type="RefSeq" id="WP_010870800.1">
    <property type="nucleotide sequence ID" value="NC_000909.1"/>
</dbReference>
<dbReference type="STRING" id="243232.MJ_1285"/>
<dbReference type="PaxDb" id="243232-MJ_1285"/>
<dbReference type="EnsemblBacteria" id="AAB99294">
    <property type="protein sequence ID" value="AAB99294"/>
    <property type="gene ID" value="MJ_1285"/>
</dbReference>
<dbReference type="GeneID" id="1452185"/>
<dbReference type="KEGG" id="mja:MJ_1285"/>
<dbReference type="eggNOG" id="arCOG08270">
    <property type="taxonomic scope" value="Archaea"/>
</dbReference>
<dbReference type="HOGENOM" id="CLU_1465125_0_0_2"/>
<dbReference type="InParanoid" id="Q58681"/>
<dbReference type="OrthoDB" id="65312at2157"/>
<dbReference type="Proteomes" id="UP000000805">
    <property type="component" value="Chromosome"/>
</dbReference>
<dbReference type="GO" id="GO:0016020">
    <property type="term" value="C:membrane"/>
    <property type="evidence" value="ECO:0007669"/>
    <property type="project" value="UniProtKB-SubCell"/>
</dbReference>